<gene>
    <name type="ordered locus">BcerKBAB4_2500</name>
</gene>
<keyword id="KW-1003">Cell membrane</keyword>
<keyword id="KW-0472">Membrane</keyword>
<keyword id="KW-0812">Transmembrane</keyword>
<keyword id="KW-1133">Transmembrane helix</keyword>
<evidence type="ECO:0000255" key="1">
    <source>
        <dbReference type="HAMAP-Rule" id="MF_01572"/>
    </source>
</evidence>
<comment type="subcellular location">
    <subcellularLocation>
        <location evidence="1">Cell membrane</location>
        <topology evidence="1">Multi-pass membrane protein</topology>
    </subcellularLocation>
</comment>
<comment type="similarity">
    <text evidence="1">Belongs to the UPF0397 family.</text>
</comment>
<dbReference type="EMBL" id="CP000903">
    <property type="protein sequence ID" value="ABY43705.1"/>
    <property type="molecule type" value="Genomic_DNA"/>
</dbReference>
<dbReference type="RefSeq" id="WP_012261025.1">
    <property type="nucleotide sequence ID" value="NC_010184.1"/>
</dbReference>
<dbReference type="SMR" id="A9VHJ1"/>
<dbReference type="KEGG" id="bwe:BcerKBAB4_2500"/>
<dbReference type="eggNOG" id="COG4720">
    <property type="taxonomic scope" value="Bacteria"/>
</dbReference>
<dbReference type="HOGENOM" id="CLU_120023_0_0_9"/>
<dbReference type="Proteomes" id="UP000002154">
    <property type="component" value="Chromosome"/>
</dbReference>
<dbReference type="GO" id="GO:0005886">
    <property type="term" value="C:plasma membrane"/>
    <property type="evidence" value="ECO:0007669"/>
    <property type="project" value="UniProtKB-SubCell"/>
</dbReference>
<dbReference type="Gene3D" id="1.10.1760.20">
    <property type="match status" value="1"/>
</dbReference>
<dbReference type="HAMAP" id="MF_01572">
    <property type="entry name" value="UPF0397"/>
    <property type="match status" value="1"/>
</dbReference>
<dbReference type="InterPro" id="IPR009825">
    <property type="entry name" value="ECF_substrate-spec-like"/>
</dbReference>
<dbReference type="InterPro" id="IPR022914">
    <property type="entry name" value="UPF0397"/>
</dbReference>
<dbReference type="NCBIfam" id="NF010182">
    <property type="entry name" value="PRK13661.1"/>
    <property type="match status" value="1"/>
</dbReference>
<dbReference type="PANTHER" id="PTHR37815">
    <property type="entry name" value="UPF0397 PROTEIN BC_2624-RELATED"/>
    <property type="match status" value="1"/>
</dbReference>
<dbReference type="PANTHER" id="PTHR37815:SF3">
    <property type="entry name" value="UPF0397 PROTEIN SPR0429"/>
    <property type="match status" value="1"/>
</dbReference>
<dbReference type="Pfam" id="PF07155">
    <property type="entry name" value="ECF-ribofla_trS"/>
    <property type="match status" value="1"/>
</dbReference>
<accession>A9VHJ1</accession>
<proteinExistence type="inferred from homology"/>
<reference key="1">
    <citation type="journal article" date="2008" name="Chem. Biol. Interact.">
        <title>Extending the Bacillus cereus group genomics to putative food-borne pathogens of different toxicity.</title>
        <authorList>
            <person name="Lapidus A."/>
            <person name="Goltsman E."/>
            <person name="Auger S."/>
            <person name="Galleron N."/>
            <person name="Segurens B."/>
            <person name="Dossat C."/>
            <person name="Land M.L."/>
            <person name="Broussolle V."/>
            <person name="Brillard J."/>
            <person name="Guinebretiere M.-H."/>
            <person name="Sanchis V."/>
            <person name="Nguen-the C."/>
            <person name="Lereclus D."/>
            <person name="Richardson P."/>
            <person name="Wincker P."/>
            <person name="Weissenbach J."/>
            <person name="Ehrlich S.D."/>
            <person name="Sorokin A."/>
        </authorList>
    </citation>
    <scope>NUCLEOTIDE SEQUENCE [LARGE SCALE GENOMIC DNA]</scope>
    <source>
        <strain>KBAB4</strain>
    </source>
</reference>
<name>Y2500_BACMK</name>
<organism>
    <name type="scientific">Bacillus mycoides (strain KBAB4)</name>
    <name type="common">Bacillus weihenstephanensis</name>
    <dbReference type="NCBI Taxonomy" id="315730"/>
    <lineage>
        <taxon>Bacteria</taxon>
        <taxon>Bacillati</taxon>
        <taxon>Bacillota</taxon>
        <taxon>Bacilli</taxon>
        <taxon>Bacillales</taxon>
        <taxon>Bacillaceae</taxon>
        <taxon>Bacillus</taxon>
        <taxon>Bacillus cereus group</taxon>
    </lineage>
</organism>
<feature type="chain" id="PRO_1000200761" description="UPF0397 protein BcerKBAB4_2500">
    <location>
        <begin position="1"/>
        <end position="182"/>
    </location>
</feature>
<feature type="transmembrane region" description="Helical" evidence="1">
    <location>
        <begin position="9"/>
        <end position="29"/>
    </location>
</feature>
<feature type="transmembrane region" description="Helical" evidence="1">
    <location>
        <begin position="40"/>
        <end position="60"/>
    </location>
</feature>
<feature type="transmembrane region" description="Helical" evidence="1">
    <location>
        <begin position="71"/>
        <end position="91"/>
    </location>
</feature>
<feature type="transmembrane region" description="Helical" evidence="1">
    <location>
        <begin position="114"/>
        <end position="134"/>
    </location>
</feature>
<feature type="transmembrane region" description="Helical" evidence="1">
    <location>
        <begin position="142"/>
        <end position="162"/>
    </location>
</feature>
<protein>
    <recommendedName>
        <fullName evidence="1">UPF0397 protein BcerKBAB4_2500</fullName>
    </recommendedName>
</protein>
<sequence>MNKLTTKLVVAIGIGAALYGVLGLWGFSIAPNTFIKPALAILTVFGALFGPVAGLLIGLIGHTVTDTIAGWGIWWGWVISSGIIGLAMGLIQKRVGFSVKHGTYNNRDISYFTIAGLIGIVIAIIFAGSFDIIVMGEPFDKIVIQVLGATIADVIVFLVLGLPITIGLAKSNRKHTHLKIEK</sequence>